<feature type="chain" id="PRO_0000202612" description="Ectonucleotide pyrophosphatase/phosphodiesterase 2">
    <location>
        <begin position="1"/>
        <end position="493"/>
    </location>
</feature>
<feature type="topological domain" description="Cytoplasmic" evidence="2">
    <location>
        <begin position="1"/>
        <end position="28"/>
    </location>
</feature>
<feature type="transmembrane region" description="Helical; Signal-anchor for type II membrane protein" evidence="2">
    <location>
        <begin position="29"/>
        <end position="45"/>
    </location>
</feature>
<feature type="topological domain" description="Extracellular" evidence="2">
    <location>
        <begin position="46"/>
        <end position="493"/>
    </location>
</feature>
<feature type="region of interest" description="Phosphodiesterase">
    <location>
        <begin position="76"/>
        <end position="438"/>
    </location>
</feature>
<feature type="active site" description="Nucleophile" evidence="1">
    <location>
        <position position="127"/>
    </location>
</feature>
<feature type="glycosylation site" description="N-linked (GlcNAc...) asparagine" evidence="2">
    <location>
        <position position="62"/>
    </location>
</feature>
<feature type="glycosylation site" description="N-linked (GlcNAc...) asparagine" evidence="2">
    <location>
        <position position="69"/>
    </location>
</feature>
<feature type="glycosylation site" description="N-linked (GlcNAc...) asparagine" evidence="2">
    <location>
        <position position="112"/>
    </location>
</feature>
<feature type="glycosylation site" description="N-linked (GlcNAc...) asparagine" evidence="2">
    <location>
        <position position="153"/>
    </location>
</feature>
<feature type="glycosylation site" description="N-linked (GlcNAc...) asparagine" evidence="2">
    <location>
        <position position="441"/>
    </location>
</feature>
<feature type="sequence conflict" description="In Ref. 3; AAT92706." evidence="4" ref="3">
    <original>T</original>
    <variation>I</variation>
    <location>
        <position position="125"/>
    </location>
</feature>
<reference key="1">
    <citation type="journal article" date="1997" name="Nature">
        <title>The nucleotide sequence of Saccharomyces cerevisiae chromosome V.</title>
        <authorList>
            <person name="Dietrich F.S."/>
            <person name="Mulligan J.T."/>
            <person name="Hennessy K.M."/>
            <person name="Yelton M.A."/>
            <person name="Allen E."/>
            <person name="Araujo R."/>
            <person name="Aviles E."/>
            <person name="Berno A."/>
            <person name="Brennan T."/>
            <person name="Carpenter J."/>
            <person name="Chen E."/>
            <person name="Cherry J.M."/>
            <person name="Chung E."/>
            <person name="Duncan M."/>
            <person name="Guzman E."/>
            <person name="Hartzell G."/>
            <person name="Hunicke-Smith S."/>
            <person name="Hyman R.W."/>
            <person name="Kayser A."/>
            <person name="Komp C."/>
            <person name="Lashkari D."/>
            <person name="Lew H."/>
            <person name="Lin D."/>
            <person name="Mosedale D."/>
            <person name="Nakahara K."/>
            <person name="Namath A."/>
            <person name="Norgren R."/>
            <person name="Oefner P."/>
            <person name="Oh C."/>
            <person name="Petel F.X."/>
            <person name="Roberts D."/>
            <person name="Sehl P."/>
            <person name="Schramm S."/>
            <person name="Shogren T."/>
            <person name="Smith V."/>
            <person name="Taylor P."/>
            <person name="Wei Y."/>
            <person name="Botstein D."/>
            <person name="Davis R.W."/>
        </authorList>
    </citation>
    <scope>NUCLEOTIDE SEQUENCE [LARGE SCALE GENOMIC DNA]</scope>
    <source>
        <strain>ATCC 204508 / S288c</strain>
    </source>
</reference>
<reference key="2">
    <citation type="journal article" date="2014" name="G3 (Bethesda)">
        <title>The reference genome sequence of Saccharomyces cerevisiae: Then and now.</title>
        <authorList>
            <person name="Engel S.R."/>
            <person name="Dietrich F.S."/>
            <person name="Fisk D.G."/>
            <person name="Binkley G."/>
            <person name="Balakrishnan R."/>
            <person name="Costanzo M.C."/>
            <person name="Dwight S.S."/>
            <person name="Hitz B.C."/>
            <person name="Karra K."/>
            <person name="Nash R.S."/>
            <person name="Weng S."/>
            <person name="Wong E.D."/>
            <person name="Lloyd P."/>
            <person name="Skrzypek M.S."/>
            <person name="Miyasato S.R."/>
            <person name="Simison M."/>
            <person name="Cherry J.M."/>
        </authorList>
    </citation>
    <scope>GENOME REANNOTATION</scope>
    <source>
        <strain>ATCC 204508 / S288c</strain>
    </source>
</reference>
<reference key="3">
    <citation type="journal article" date="2007" name="Genome Res.">
        <title>Approaching a complete repository of sequence-verified protein-encoding clones for Saccharomyces cerevisiae.</title>
        <authorList>
            <person name="Hu Y."/>
            <person name="Rolfs A."/>
            <person name="Bhullar B."/>
            <person name="Murthy T.V.S."/>
            <person name="Zhu C."/>
            <person name="Berger M.F."/>
            <person name="Camargo A.A."/>
            <person name="Kelley F."/>
            <person name="McCarron S."/>
            <person name="Jepson D."/>
            <person name="Richardson A."/>
            <person name="Raphael J."/>
            <person name="Moreira D."/>
            <person name="Taycher E."/>
            <person name="Zuo D."/>
            <person name="Mohr S."/>
            <person name="Kane M.F."/>
            <person name="Williamson J."/>
            <person name="Simpson A.J.G."/>
            <person name="Bulyk M.L."/>
            <person name="Harlow E."/>
            <person name="Marsischky G."/>
            <person name="Kolodner R.D."/>
            <person name="LaBaer J."/>
        </authorList>
    </citation>
    <scope>NUCLEOTIDE SEQUENCE [GENOMIC DNA]</scope>
    <source>
        <strain>ATCC 204508 / S288c</strain>
    </source>
</reference>
<reference key="4">
    <citation type="journal article" date="2005" name="Eukaryot. Cell">
        <title>Pho5p and newly identified nucleotide pyrophosphatases/ phosphodiesterases regulate extracellular nucleotide phosphate metabolism in Saccharomyces cerevisiae.</title>
        <authorList>
            <person name="Kennedy E.J."/>
            <person name="Pillus L."/>
            <person name="Ghosh G."/>
        </authorList>
    </citation>
    <scope>FUNCTION</scope>
    <scope>NPP ACTIVITY</scope>
    <scope>INDUCTION</scope>
    <scope>AUTOPHOSPHORYLATION</scope>
</reference>
<sequence>MLLFEQPVDLEKNNEDDTNIKPFAISRHFLLKLLLCGIILIELLLYSKCPKPIDNGPRTIANRSNTYFNGTHDFKTLTILISIDGFHPRLIDAKYTPFLYNLHNLRSPYDMNITTAPYMIPSFPTQTFPNHWSMVTGKYPIEHGIVSNIFWDNFTSSEFRPNNLDARIWSNTADPIWQLLQTESQGEYKVATHMWPGSEVVYEDHGDVPRERMPFYFGKFNQWEKLQDKLAQIFRYIDMPQLKDRPELVISYIPNVDSYGHSFGYDLRDKRLQKLIGEVDGFFLDLIEGLQKRNLLKISNVMIVSDHGMSNVNANDGEHVVVWERVFPADAMSAFISHLYNEGPMMMVCLKNPRDKQWICDLIEAQLEKAYGDEISRKFHVILKEDFDPSWKYFQYDNRKHRYDDRVGDIWILADEYYAIVKEMGDVPIGIMGTHGYNFNNCSDMASIFIGMGPMFNNEVVPPFENIEVYNMLIKASALLGEEKTKKEKSLLQ</sequence>
<comment type="function">
    <text evidence="3">Mediates extracellular nucleotide derived phosphate hydrolysis along with NPP1 and PHO5.</text>
</comment>
<comment type="catalytic activity">
    <reaction evidence="4">
        <text>Hydrolytically removes 5'-nucleotides successively from the 3'-hydroxy termini of 3'-hydroxy-terminated oligonucleotides.</text>
        <dbReference type="EC" id="3.1.4.1"/>
    </reaction>
</comment>
<comment type="catalytic activity">
    <reaction evidence="4">
        <text>a ribonucleoside 5'-triphosphate + H2O = a ribonucleoside 5'-phosphate + diphosphate + H(+)</text>
        <dbReference type="Rhea" id="RHEA:23996"/>
        <dbReference type="ChEBI" id="CHEBI:15377"/>
        <dbReference type="ChEBI" id="CHEBI:15378"/>
        <dbReference type="ChEBI" id="CHEBI:33019"/>
        <dbReference type="ChEBI" id="CHEBI:58043"/>
        <dbReference type="ChEBI" id="CHEBI:61557"/>
        <dbReference type="EC" id="3.6.1.9"/>
    </reaction>
</comment>
<comment type="catalytic activity">
    <reaction evidence="4">
        <text>a 2'-deoxyribonucleoside 5'-triphosphate + H2O = a 2'-deoxyribonucleoside 5'-phosphate + diphosphate + H(+)</text>
        <dbReference type="Rhea" id="RHEA:44644"/>
        <dbReference type="ChEBI" id="CHEBI:15377"/>
        <dbReference type="ChEBI" id="CHEBI:15378"/>
        <dbReference type="ChEBI" id="CHEBI:33019"/>
        <dbReference type="ChEBI" id="CHEBI:61560"/>
        <dbReference type="ChEBI" id="CHEBI:65317"/>
        <dbReference type="EC" id="3.6.1.9"/>
    </reaction>
</comment>
<comment type="subcellular location">
    <subcellularLocation>
        <location evidence="4">Membrane</location>
        <topology evidence="4">Single-pass type II membrane protein</topology>
    </subcellularLocation>
</comment>
<comment type="induction">
    <text evidence="3">Up-regulated during phosphate starvation.</text>
</comment>
<comment type="PTM">
    <text>Autophosphorylated as part of the catalytic cycle of phosphodiesterase/pyrophosphatase activity.</text>
</comment>
<comment type="similarity">
    <text evidence="4">Belongs to the nucleotide pyrophosphatase/phosphodiesterase family.</text>
</comment>
<proteinExistence type="evidence at protein level"/>
<protein>
    <recommendedName>
        <fullName>Ectonucleotide pyrophosphatase/phosphodiesterase 2</fullName>
        <shortName>E-NPP 2</shortName>
    </recommendedName>
    <domain>
        <recommendedName>
            <fullName>Alkaline phosphodiesterase 1</fullName>
            <ecNumber evidence="4">3.1.4.1</ecNumber>
        </recommendedName>
    </domain>
    <domain>
        <recommendedName>
            <fullName>Nucleotide pyrophosphatase</fullName>
            <shortName>NPPase</shortName>
            <ecNumber evidence="4">3.6.1.9</ecNumber>
        </recommendedName>
        <alternativeName>
            <fullName evidence="4">Nucleotide diphosphatase</fullName>
        </alternativeName>
    </domain>
</protein>
<accession>P39997</accession>
<accession>D3DLN4</accession>
<accession>Q6B2P3</accession>
<name>NPP2_YEAST</name>
<evidence type="ECO:0000250" key="1"/>
<evidence type="ECO:0000255" key="2"/>
<evidence type="ECO:0000269" key="3">
    <source>
    </source>
</evidence>
<evidence type="ECO:0000305" key="4"/>
<organism>
    <name type="scientific">Saccharomyces cerevisiae (strain ATCC 204508 / S288c)</name>
    <name type="common">Baker's yeast</name>
    <dbReference type="NCBI Taxonomy" id="559292"/>
    <lineage>
        <taxon>Eukaryota</taxon>
        <taxon>Fungi</taxon>
        <taxon>Dikarya</taxon>
        <taxon>Ascomycota</taxon>
        <taxon>Saccharomycotina</taxon>
        <taxon>Saccharomycetes</taxon>
        <taxon>Saccharomycetales</taxon>
        <taxon>Saccharomycetaceae</taxon>
        <taxon>Saccharomyces</taxon>
    </lineage>
</organism>
<dbReference type="EC" id="3.1.4.1" evidence="4"/>
<dbReference type="EC" id="3.6.1.9" evidence="4"/>
<dbReference type="EMBL" id="U18530">
    <property type="protein sequence ID" value="AAB64493.1"/>
    <property type="molecule type" value="Genomic_DNA"/>
</dbReference>
<dbReference type="EMBL" id="AY692687">
    <property type="protein sequence ID" value="AAT92706.1"/>
    <property type="molecule type" value="Genomic_DNA"/>
</dbReference>
<dbReference type="EMBL" id="BK006939">
    <property type="protein sequence ID" value="DAA07638.1"/>
    <property type="molecule type" value="Genomic_DNA"/>
</dbReference>
<dbReference type="PIR" id="S50443">
    <property type="entry name" value="S50443"/>
</dbReference>
<dbReference type="RefSeq" id="NP_010900.1">
    <property type="nucleotide sequence ID" value="NM_001178831.1"/>
</dbReference>
<dbReference type="SMR" id="P39997"/>
<dbReference type="BioGRID" id="36715">
    <property type="interactions" value="48"/>
</dbReference>
<dbReference type="DIP" id="DIP-5279N"/>
<dbReference type="FunCoup" id="P39997">
    <property type="interactions" value="275"/>
</dbReference>
<dbReference type="IntAct" id="P39997">
    <property type="interactions" value="3"/>
</dbReference>
<dbReference type="MINT" id="P39997"/>
<dbReference type="STRING" id="4932.YEL016C"/>
<dbReference type="GlyCosmos" id="P39997">
    <property type="glycosylation" value="5 sites, No reported glycans"/>
</dbReference>
<dbReference type="GlyGen" id="P39997">
    <property type="glycosylation" value="5 sites"/>
</dbReference>
<dbReference type="iPTMnet" id="P39997"/>
<dbReference type="PaxDb" id="4932-YEL016C"/>
<dbReference type="PeptideAtlas" id="P39997"/>
<dbReference type="EnsemblFungi" id="YEL016C_mRNA">
    <property type="protein sequence ID" value="YEL016C"/>
    <property type="gene ID" value="YEL016C"/>
</dbReference>
<dbReference type="GeneID" id="856699"/>
<dbReference type="KEGG" id="sce:YEL016C"/>
<dbReference type="AGR" id="SGD:S000000742"/>
<dbReference type="SGD" id="S000000742">
    <property type="gene designation" value="NPP2"/>
</dbReference>
<dbReference type="VEuPathDB" id="FungiDB:YEL016C"/>
<dbReference type="eggNOG" id="KOG2645">
    <property type="taxonomic scope" value="Eukaryota"/>
</dbReference>
<dbReference type="GeneTree" id="ENSGT00940000167607"/>
<dbReference type="HOGENOM" id="CLU_017594_3_0_1"/>
<dbReference type="InParanoid" id="P39997"/>
<dbReference type="OMA" id="DVCIDHS"/>
<dbReference type="OrthoDB" id="415411at2759"/>
<dbReference type="BioCyc" id="YEAST:G3O-30141-MONOMER"/>
<dbReference type="Reactome" id="R-SCE-196843">
    <property type="pathway name" value="Vitamin B2 (riboflavin) metabolism"/>
</dbReference>
<dbReference type="Reactome" id="R-SCE-6798695">
    <property type="pathway name" value="Neutrophil degranulation"/>
</dbReference>
<dbReference type="Reactome" id="R-SCE-6814848">
    <property type="pathway name" value="Glycerophospholipid catabolism"/>
</dbReference>
<dbReference type="Reactome" id="R-SCE-9840310">
    <property type="pathway name" value="Glycosphingolipid catabolism"/>
</dbReference>
<dbReference type="BioGRID-ORCS" id="856699">
    <property type="hits" value="0 hits in 10 CRISPR screens"/>
</dbReference>
<dbReference type="PRO" id="PR:P39997"/>
<dbReference type="Proteomes" id="UP000002311">
    <property type="component" value="Chromosome V"/>
</dbReference>
<dbReference type="RNAct" id="P39997">
    <property type="molecule type" value="protein"/>
</dbReference>
<dbReference type="GO" id="GO:0005783">
    <property type="term" value="C:endoplasmic reticulum"/>
    <property type="evidence" value="ECO:0007005"/>
    <property type="project" value="SGD"/>
</dbReference>
<dbReference type="GO" id="GO:0016020">
    <property type="term" value="C:membrane"/>
    <property type="evidence" value="ECO:0007669"/>
    <property type="project" value="UniProtKB-SubCell"/>
</dbReference>
<dbReference type="GO" id="GO:0047429">
    <property type="term" value="F:nucleoside triphosphate diphosphatase activity"/>
    <property type="evidence" value="ECO:0000314"/>
    <property type="project" value="SGD"/>
</dbReference>
<dbReference type="GO" id="GO:0004528">
    <property type="term" value="F:phosphodiesterase I activity"/>
    <property type="evidence" value="ECO:0007669"/>
    <property type="project" value="UniProtKB-EC"/>
</dbReference>
<dbReference type="GO" id="GO:0017111">
    <property type="term" value="F:ribonucleoside triphosphate phosphatase activity"/>
    <property type="evidence" value="ECO:0000315"/>
    <property type="project" value="SGD"/>
</dbReference>
<dbReference type="GO" id="GO:0009141">
    <property type="term" value="P:nucleoside triphosphate metabolic process"/>
    <property type="evidence" value="ECO:0000315"/>
    <property type="project" value="SGD"/>
</dbReference>
<dbReference type="CDD" id="cd16018">
    <property type="entry name" value="Enpp"/>
    <property type="match status" value="1"/>
</dbReference>
<dbReference type="Gene3D" id="3.30.1360.180">
    <property type="match status" value="1"/>
</dbReference>
<dbReference type="Gene3D" id="3.40.720.10">
    <property type="entry name" value="Alkaline Phosphatase, subunit A"/>
    <property type="match status" value="1"/>
</dbReference>
<dbReference type="InterPro" id="IPR017850">
    <property type="entry name" value="Alkaline_phosphatase_core_sf"/>
</dbReference>
<dbReference type="InterPro" id="IPR002591">
    <property type="entry name" value="Phosphodiest/P_Trfase"/>
</dbReference>
<dbReference type="PANTHER" id="PTHR10151:SF120">
    <property type="entry name" value="BIS(5'-ADENOSYL)-TRIPHOSPHATASE"/>
    <property type="match status" value="1"/>
</dbReference>
<dbReference type="PANTHER" id="PTHR10151">
    <property type="entry name" value="ECTONUCLEOTIDE PYROPHOSPHATASE/PHOSPHODIESTERASE"/>
    <property type="match status" value="1"/>
</dbReference>
<dbReference type="Pfam" id="PF01663">
    <property type="entry name" value="Phosphodiest"/>
    <property type="match status" value="1"/>
</dbReference>
<dbReference type="SUPFAM" id="SSF53649">
    <property type="entry name" value="Alkaline phosphatase-like"/>
    <property type="match status" value="1"/>
</dbReference>
<gene>
    <name type="primary">NPP2</name>
    <name type="ordered locus">YEL016C</name>
</gene>
<keyword id="KW-0325">Glycoprotein</keyword>
<keyword id="KW-0378">Hydrolase</keyword>
<keyword id="KW-0472">Membrane</keyword>
<keyword id="KW-0511">Multifunctional enzyme</keyword>
<keyword id="KW-0597">Phosphoprotein</keyword>
<keyword id="KW-1185">Reference proteome</keyword>
<keyword id="KW-0735">Signal-anchor</keyword>
<keyword id="KW-0812">Transmembrane</keyword>
<keyword id="KW-1133">Transmembrane helix</keyword>